<proteinExistence type="evidence at transcript level"/>
<gene>
    <name type="primary">LMF2</name>
    <name type="ORF">RCJMB04_8i13</name>
</gene>
<name>LMF2_CHICK</name>
<dbReference type="EMBL" id="AJ719935">
    <property type="protein sequence ID" value="CAG31594.1"/>
    <property type="status" value="ALT_SEQ"/>
    <property type="molecule type" value="mRNA"/>
</dbReference>
<dbReference type="RefSeq" id="NP_001026743.1">
    <property type="nucleotide sequence ID" value="NM_001031572.1"/>
</dbReference>
<dbReference type="FunCoup" id="Q5ZKZ9">
    <property type="interactions" value="572"/>
</dbReference>
<dbReference type="STRING" id="9031.ENSGALP00000049076"/>
<dbReference type="GlyCosmos" id="Q5ZKZ9">
    <property type="glycosylation" value="1 site, No reported glycans"/>
</dbReference>
<dbReference type="GlyGen" id="Q5ZKZ9">
    <property type="glycosylation" value="1 site"/>
</dbReference>
<dbReference type="PaxDb" id="9031-ENSGALP00000039613"/>
<dbReference type="GeneID" id="429380"/>
<dbReference type="KEGG" id="gga:429380"/>
<dbReference type="CTD" id="91289"/>
<dbReference type="VEuPathDB" id="HostDB:geneid_429380"/>
<dbReference type="eggNOG" id="ENOG502QTN6">
    <property type="taxonomic scope" value="Eukaryota"/>
</dbReference>
<dbReference type="InParanoid" id="Q5ZKZ9"/>
<dbReference type="OrthoDB" id="5988002at2759"/>
<dbReference type="PhylomeDB" id="Q5ZKZ9"/>
<dbReference type="PRO" id="PR:Q5ZKZ9"/>
<dbReference type="Proteomes" id="UP000000539">
    <property type="component" value="Unassembled WGS sequence"/>
</dbReference>
<dbReference type="GO" id="GO:0005789">
    <property type="term" value="C:endoplasmic reticulum membrane"/>
    <property type="evidence" value="ECO:0000318"/>
    <property type="project" value="GO_Central"/>
</dbReference>
<dbReference type="GO" id="GO:0051604">
    <property type="term" value="P:protein maturation"/>
    <property type="evidence" value="ECO:0000318"/>
    <property type="project" value="GO_Central"/>
</dbReference>
<dbReference type="InterPro" id="IPR009613">
    <property type="entry name" value="LMF"/>
</dbReference>
<dbReference type="PANTHER" id="PTHR14463">
    <property type="entry name" value="LIPASE MATURATION FACTOR"/>
    <property type="match status" value="1"/>
</dbReference>
<dbReference type="PANTHER" id="PTHR14463:SF5">
    <property type="entry name" value="LIPASE MATURATION FACTOR 2"/>
    <property type="match status" value="1"/>
</dbReference>
<dbReference type="Pfam" id="PF06762">
    <property type="entry name" value="LMF1"/>
    <property type="match status" value="1"/>
</dbReference>
<dbReference type="Pfam" id="PF25179">
    <property type="entry name" value="LMF1_C"/>
    <property type="match status" value="1"/>
</dbReference>
<comment type="function">
    <text evidence="1">Involved in the maturation of specific proteins in the endoplasmic reticulum. May be required for maturation and transport of active lipoprotein lipase (LPL) through the secretory pathway (By similarity).</text>
</comment>
<comment type="subcellular location">
    <subcellularLocation>
        <location evidence="1">Endoplasmic reticulum membrane</location>
        <topology evidence="1">Multi-pass membrane protein</topology>
    </subcellularLocation>
</comment>
<comment type="similarity">
    <text evidence="4">Belongs to the lipase maturation factor family.</text>
</comment>
<comment type="sequence caution" evidence="4">
    <conflict type="erroneous termination">
        <sequence resource="EMBL-CDS" id="CAG31594"/>
    </conflict>
    <text>Truncated C-terminus.</text>
</comment>
<protein>
    <recommendedName>
        <fullName>Lipase maturation factor 2</fullName>
    </recommendedName>
</protein>
<reference key="1">
    <citation type="journal article" date="2005" name="Genome Biol.">
        <title>Full-length cDNAs from chicken bursal lymphocytes to facilitate gene function analysis.</title>
        <authorList>
            <person name="Caldwell R.B."/>
            <person name="Kierzek A.M."/>
            <person name="Arakawa H."/>
            <person name="Bezzubov Y."/>
            <person name="Zaim J."/>
            <person name="Fiedler P."/>
            <person name="Kutter S."/>
            <person name="Blagodatski A."/>
            <person name="Kostovska D."/>
            <person name="Koter M."/>
            <person name="Plachy J."/>
            <person name="Carninci P."/>
            <person name="Hayashizaki Y."/>
            <person name="Buerstedde J.-M."/>
        </authorList>
    </citation>
    <scope>NUCLEOTIDE SEQUENCE [LARGE SCALE MRNA]</scope>
    <source>
        <strain>CB</strain>
        <tissue>Bursa of Fabricius</tissue>
    </source>
</reference>
<sequence>MGEPPRRPRELFLAGLAAAYLAAFVSLYLQIPGLYGRDGILPARRVLRLSGKGLWEQLRDVPTLLWLGPQLGLDTEQGMELLCLLGAVASMGALLCAPLRDCLLFAVLRVFYLSLYQVGQVFLYFQWDSLLLEAGFLAVLVAPLRLFKWRSTAWRPHDSVTFWLVRWLLFRLMFASGVVKLTSRCPTWWGLTALTYHYETQCIPTPAAWYAHQLPVWFQKFSVVATYVIEIAVPLLFFMPIRRLRLFAFYCQVLLQILIILTGNYNFFNALTIVLAFSLLDEEHMGRWMGRGKRKHGSSAWPPTLLSFLSTLLELATYALLLYWSVHYFSLEIDWEKGLLESKVAFTYHEFTQWLRAVTLPLVGLGFLSLSWEILSALYRCACVRGFFWKLWATLQWAVFATATVGMFAISLVPFTYIDYESNGKLWPGIHQMFSAVERFQVVNSYGLFRRMTGVGGRPEVVLEGSYDKQSWTEIEFMYKPGNVSAAPAVVAPHQPRLDWQMWFAALAHHSSSPWFASFVHRLLQGKEDVIRLVQVDEDKYPFSTQPPVYLRAQLYKYWFTHSAESGAGAAQWWRRQHVQEFFPTVSVGDPTLDGLLAQHGLKDKLPLKRPVDAFLPWLLSSVRQLSRPFSPHVVLWSLYVVAATTCLLRAMARRPRGGAPPTRHKAPKQPRGDQGEKNGQLRRKEGREAEERGEGRSRGAADGEGPRGTKRRK</sequence>
<organism>
    <name type="scientific">Gallus gallus</name>
    <name type="common">Chicken</name>
    <dbReference type="NCBI Taxonomy" id="9031"/>
    <lineage>
        <taxon>Eukaryota</taxon>
        <taxon>Metazoa</taxon>
        <taxon>Chordata</taxon>
        <taxon>Craniata</taxon>
        <taxon>Vertebrata</taxon>
        <taxon>Euteleostomi</taxon>
        <taxon>Archelosauria</taxon>
        <taxon>Archosauria</taxon>
        <taxon>Dinosauria</taxon>
        <taxon>Saurischia</taxon>
        <taxon>Theropoda</taxon>
        <taxon>Coelurosauria</taxon>
        <taxon>Aves</taxon>
        <taxon>Neognathae</taxon>
        <taxon>Galloanserae</taxon>
        <taxon>Galliformes</taxon>
        <taxon>Phasianidae</taxon>
        <taxon>Phasianinae</taxon>
        <taxon>Gallus</taxon>
    </lineage>
</organism>
<evidence type="ECO:0000250" key="1"/>
<evidence type="ECO:0000255" key="2"/>
<evidence type="ECO:0000256" key="3">
    <source>
        <dbReference type="SAM" id="MobiDB-lite"/>
    </source>
</evidence>
<evidence type="ECO:0000305" key="4"/>
<feature type="chain" id="PRO_0000324513" description="Lipase maturation factor 2">
    <location>
        <begin position="1"/>
        <end position="714"/>
    </location>
</feature>
<feature type="transmembrane region" description="Helical" evidence="2">
    <location>
        <begin position="11"/>
        <end position="31"/>
    </location>
</feature>
<feature type="transmembrane region" description="Helical" evidence="2">
    <location>
        <begin position="79"/>
        <end position="99"/>
    </location>
</feature>
<feature type="transmembrane region" description="Helical" evidence="2">
    <location>
        <begin position="103"/>
        <end position="125"/>
    </location>
</feature>
<feature type="transmembrane region" description="Helical" evidence="2">
    <location>
        <begin position="159"/>
        <end position="179"/>
    </location>
</feature>
<feature type="transmembrane region" description="Helical" evidence="2">
    <location>
        <begin position="221"/>
        <end position="241"/>
    </location>
</feature>
<feature type="transmembrane region" description="Helical" evidence="2">
    <location>
        <begin position="257"/>
        <end position="277"/>
    </location>
</feature>
<feature type="transmembrane region" description="Helical" evidence="2">
    <location>
        <begin position="304"/>
        <end position="324"/>
    </location>
</feature>
<feature type="transmembrane region" description="Helical" evidence="2">
    <location>
        <begin position="358"/>
        <end position="378"/>
    </location>
</feature>
<feature type="transmembrane region" description="Helical" evidence="2">
    <location>
        <begin position="398"/>
        <end position="418"/>
    </location>
</feature>
<feature type="transmembrane region" description="Helical" evidence="2">
    <location>
        <begin position="629"/>
        <end position="649"/>
    </location>
</feature>
<feature type="region of interest" description="Disordered" evidence="3">
    <location>
        <begin position="654"/>
        <end position="714"/>
    </location>
</feature>
<feature type="compositionally biased region" description="Basic residues" evidence="3">
    <location>
        <begin position="654"/>
        <end position="669"/>
    </location>
</feature>
<feature type="compositionally biased region" description="Basic and acidic residues" evidence="3">
    <location>
        <begin position="683"/>
        <end position="708"/>
    </location>
</feature>
<feature type="glycosylation site" description="N-linked (GlcNAc...) asparagine" evidence="2">
    <location>
        <position position="483"/>
    </location>
</feature>
<keyword id="KW-0256">Endoplasmic reticulum</keyword>
<keyword id="KW-0325">Glycoprotein</keyword>
<keyword id="KW-0472">Membrane</keyword>
<keyword id="KW-1185">Reference proteome</keyword>
<keyword id="KW-0812">Transmembrane</keyword>
<keyword id="KW-1133">Transmembrane helix</keyword>
<accession>Q5ZKZ9</accession>